<feature type="chain" id="PRO_0000104700" description="Large ribosomal subunit protein uL15">
    <location>
        <begin position="1"/>
        <end position="144"/>
    </location>
</feature>
<feature type="region of interest" description="Disordered" evidence="2">
    <location>
        <begin position="1"/>
        <end position="48"/>
    </location>
</feature>
<comment type="function">
    <text evidence="1">Binds to the 23S rRNA.</text>
</comment>
<comment type="subunit">
    <text evidence="1">Part of the 50S ribosomal subunit.</text>
</comment>
<comment type="similarity">
    <text evidence="1">Belongs to the universal ribosomal protein uL15 family.</text>
</comment>
<organism>
    <name type="scientific">Chlamydia muridarum (strain MoPn / Nigg)</name>
    <dbReference type="NCBI Taxonomy" id="243161"/>
    <lineage>
        <taxon>Bacteria</taxon>
        <taxon>Pseudomonadati</taxon>
        <taxon>Chlamydiota</taxon>
        <taxon>Chlamydiia</taxon>
        <taxon>Chlamydiales</taxon>
        <taxon>Chlamydiaceae</taxon>
        <taxon>Chlamydia/Chlamydophila group</taxon>
        <taxon>Chlamydia</taxon>
    </lineage>
</organism>
<protein>
    <recommendedName>
        <fullName evidence="1">Large ribosomal subunit protein uL15</fullName>
    </recommendedName>
    <alternativeName>
        <fullName evidence="3">50S ribosomal protein L15</fullName>
    </alternativeName>
</protein>
<evidence type="ECO:0000255" key="1">
    <source>
        <dbReference type="HAMAP-Rule" id="MF_01341"/>
    </source>
</evidence>
<evidence type="ECO:0000256" key="2">
    <source>
        <dbReference type="SAM" id="MobiDB-lite"/>
    </source>
</evidence>
<evidence type="ECO:0000305" key="3"/>
<gene>
    <name evidence="1" type="primary">rplO</name>
    <name type="ordered locus">TC_0798</name>
</gene>
<sequence length="144" mass="16233">MIKLEYLQDPSPRKRRTKLLGRGPSSGHGKTSGRGHKGDGSRSGYKRRFGYEGGGVPLYRRVPTRGFSHKRFDKCVEEITTQRLNGIFENGEEVSLETLKQRKVIHRETSRVKVILKGALDKKLVWKDAAIVLSEGVKSLIETV</sequence>
<keyword id="KW-0687">Ribonucleoprotein</keyword>
<keyword id="KW-0689">Ribosomal protein</keyword>
<keyword id="KW-0694">RNA-binding</keyword>
<keyword id="KW-0699">rRNA-binding</keyword>
<proteinExistence type="inferred from homology"/>
<name>RL15_CHLMU</name>
<accession>Q9PJN0</accession>
<dbReference type="EMBL" id="AE002160">
    <property type="protein sequence ID" value="AAF39601.1"/>
    <property type="molecule type" value="Genomic_DNA"/>
</dbReference>
<dbReference type="PIR" id="F81663">
    <property type="entry name" value="F81663"/>
</dbReference>
<dbReference type="RefSeq" id="WP_010231578.1">
    <property type="nucleotide sequence ID" value="NZ_CP063055.1"/>
</dbReference>
<dbReference type="SMR" id="Q9PJN0"/>
<dbReference type="GeneID" id="1246165"/>
<dbReference type="KEGG" id="cmu:TC_0798"/>
<dbReference type="eggNOG" id="COG0200">
    <property type="taxonomic scope" value="Bacteria"/>
</dbReference>
<dbReference type="HOGENOM" id="CLU_055188_4_2_0"/>
<dbReference type="OrthoDB" id="9810293at2"/>
<dbReference type="Proteomes" id="UP000000800">
    <property type="component" value="Chromosome"/>
</dbReference>
<dbReference type="GO" id="GO:0022625">
    <property type="term" value="C:cytosolic large ribosomal subunit"/>
    <property type="evidence" value="ECO:0007669"/>
    <property type="project" value="TreeGrafter"/>
</dbReference>
<dbReference type="GO" id="GO:0019843">
    <property type="term" value="F:rRNA binding"/>
    <property type="evidence" value="ECO:0007669"/>
    <property type="project" value="UniProtKB-UniRule"/>
</dbReference>
<dbReference type="GO" id="GO:0003735">
    <property type="term" value="F:structural constituent of ribosome"/>
    <property type="evidence" value="ECO:0007669"/>
    <property type="project" value="InterPro"/>
</dbReference>
<dbReference type="GO" id="GO:0006412">
    <property type="term" value="P:translation"/>
    <property type="evidence" value="ECO:0007669"/>
    <property type="project" value="UniProtKB-UniRule"/>
</dbReference>
<dbReference type="Gene3D" id="3.100.10.10">
    <property type="match status" value="1"/>
</dbReference>
<dbReference type="HAMAP" id="MF_01341">
    <property type="entry name" value="Ribosomal_uL15"/>
    <property type="match status" value="1"/>
</dbReference>
<dbReference type="InterPro" id="IPR030878">
    <property type="entry name" value="Ribosomal_uL15"/>
</dbReference>
<dbReference type="InterPro" id="IPR036227">
    <property type="entry name" value="Ribosomal_uL15/eL18_sf"/>
</dbReference>
<dbReference type="InterPro" id="IPR005749">
    <property type="entry name" value="Ribosomal_uL15_bac-type"/>
</dbReference>
<dbReference type="NCBIfam" id="TIGR01071">
    <property type="entry name" value="rplO_bact"/>
    <property type="match status" value="1"/>
</dbReference>
<dbReference type="PANTHER" id="PTHR12934">
    <property type="entry name" value="50S RIBOSOMAL PROTEIN L15"/>
    <property type="match status" value="1"/>
</dbReference>
<dbReference type="PANTHER" id="PTHR12934:SF11">
    <property type="entry name" value="LARGE RIBOSOMAL SUBUNIT PROTEIN UL15M"/>
    <property type="match status" value="1"/>
</dbReference>
<dbReference type="SUPFAM" id="SSF52080">
    <property type="entry name" value="Ribosomal proteins L15p and L18e"/>
    <property type="match status" value="1"/>
</dbReference>
<reference key="1">
    <citation type="journal article" date="2000" name="Nucleic Acids Res.">
        <title>Genome sequences of Chlamydia trachomatis MoPn and Chlamydia pneumoniae AR39.</title>
        <authorList>
            <person name="Read T.D."/>
            <person name="Brunham R.C."/>
            <person name="Shen C."/>
            <person name="Gill S.R."/>
            <person name="Heidelberg J.F."/>
            <person name="White O."/>
            <person name="Hickey E.K."/>
            <person name="Peterson J.D."/>
            <person name="Utterback T.R."/>
            <person name="Berry K.J."/>
            <person name="Bass S."/>
            <person name="Linher K.D."/>
            <person name="Weidman J.F."/>
            <person name="Khouri H.M."/>
            <person name="Craven B."/>
            <person name="Bowman C."/>
            <person name="Dodson R.J."/>
            <person name="Gwinn M.L."/>
            <person name="Nelson W.C."/>
            <person name="DeBoy R.T."/>
            <person name="Kolonay J.F."/>
            <person name="McClarty G."/>
            <person name="Salzberg S.L."/>
            <person name="Eisen J.A."/>
            <person name="Fraser C.M."/>
        </authorList>
    </citation>
    <scope>NUCLEOTIDE SEQUENCE [LARGE SCALE GENOMIC DNA]</scope>
    <source>
        <strain>MoPn / Nigg</strain>
    </source>
</reference>